<feature type="signal peptide" evidence="1">
    <location>
        <begin position="1"/>
        <end position="35"/>
    </location>
</feature>
<feature type="chain" id="PRO_0000252098" description="Expansin-like A1">
    <location>
        <begin position="36"/>
        <end position="279"/>
    </location>
</feature>
<feature type="domain" description="Expansin-like EG45" evidence="3">
    <location>
        <begin position="56"/>
        <end position="161"/>
    </location>
</feature>
<feature type="domain" description="Expansin-like CBD" evidence="2">
    <location>
        <begin position="175"/>
        <end position="258"/>
    </location>
</feature>
<feature type="glycosylation site" description="N-linked (GlcNAc...) asparagine" evidence="1">
    <location>
        <position position="118"/>
    </location>
</feature>
<sequence>MAVSVRCCFGSSSLSHHARLLLVIVALLAPRLASGCDRCVRRSRAAYYTSSLTLTAGSCGYGTAAATFNGGGFLAAAGPALYRGGVGCGACYQVRCKDKKLCSNAGARVVVTDRARTNRTGLVLSSPAFAAMARPGMAASLTELAAVDVEYKRVPCEYRHRSLSVRVDERSRGPNELTISFLYQGGQTDIVAVDVAQVGSSSWKFMTREHGPSWSMANAPPGPLQMRLVVTGGYDGKWVWADREVLPRRWRAGEVYDTGVQITDIAQEGCFPCDTHEWK</sequence>
<accession>Q10S70</accession>
<accession>A0A0P0VSR0</accession>
<accession>Q0DVF6</accession>
<accession>Q8H275</accession>
<accession>Q8LGS6</accession>
<accession>Q8LSQ4</accession>
<dbReference type="EMBL" id="AY039022">
    <property type="protein sequence ID" value="AAK84681.1"/>
    <property type="molecule type" value="Genomic_DNA"/>
</dbReference>
<dbReference type="EMBL" id="AY100693">
    <property type="protein sequence ID" value="AAM52409.1"/>
    <property type="molecule type" value="mRNA"/>
</dbReference>
<dbReference type="EMBL" id="AC098693">
    <property type="status" value="NOT_ANNOTATED_CDS"/>
    <property type="molecule type" value="Genomic_DNA"/>
</dbReference>
<dbReference type="EMBL" id="DP000009">
    <property type="protein sequence ID" value="ABF93824.1"/>
    <property type="molecule type" value="Genomic_DNA"/>
</dbReference>
<dbReference type="EMBL" id="AP008209">
    <property type="protein sequence ID" value="BAF10782.1"/>
    <property type="molecule type" value="Genomic_DNA"/>
</dbReference>
<dbReference type="EMBL" id="AP014959">
    <property type="protein sequence ID" value="BAS82149.1"/>
    <property type="molecule type" value="Genomic_DNA"/>
</dbReference>
<dbReference type="EMBL" id="CM000140">
    <property type="protein sequence ID" value="EEE58281.1"/>
    <property type="molecule type" value="Genomic_DNA"/>
</dbReference>
<dbReference type="EMBL" id="AK061453">
    <property type="protein sequence ID" value="BAG87937.1"/>
    <property type="molecule type" value="mRNA"/>
</dbReference>
<dbReference type="EMBL" id="AK067081">
    <property type="protein sequence ID" value="BAG90257.1"/>
    <property type="molecule type" value="mRNA"/>
</dbReference>
<dbReference type="EMBL" id="AK099870">
    <property type="protein sequence ID" value="BAG94331.1"/>
    <property type="molecule type" value="mRNA"/>
</dbReference>
<dbReference type="RefSeq" id="XP_015628071.1">
    <property type="nucleotide sequence ID" value="XM_015772585.1"/>
</dbReference>
<dbReference type="SMR" id="Q10S70"/>
<dbReference type="FunCoup" id="Q10S70">
    <property type="interactions" value="541"/>
</dbReference>
<dbReference type="STRING" id="39947.Q10S70"/>
<dbReference type="GlyCosmos" id="Q10S70">
    <property type="glycosylation" value="1 site, No reported glycans"/>
</dbReference>
<dbReference type="PaxDb" id="39947-Q10S70"/>
<dbReference type="EnsemblPlants" id="Os03t0132200-01">
    <property type="protein sequence ID" value="Os03t0132200-01"/>
    <property type="gene ID" value="Os03g0132200"/>
</dbReference>
<dbReference type="Gramene" id="Os03t0132200-01">
    <property type="protein sequence ID" value="Os03t0132200-01"/>
    <property type="gene ID" value="Os03g0132200"/>
</dbReference>
<dbReference type="KEGG" id="dosa:Os03g0132200"/>
<dbReference type="eggNOG" id="ENOG502QSGZ">
    <property type="taxonomic scope" value="Eukaryota"/>
</dbReference>
<dbReference type="HOGENOM" id="CLU_027462_3_1_1"/>
<dbReference type="InParanoid" id="Q10S70"/>
<dbReference type="OMA" id="IRCKNTT"/>
<dbReference type="OrthoDB" id="623266at2759"/>
<dbReference type="Proteomes" id="UP000000763">
    <property type="component" value="Chromosome 3"/>
</dbReference>
<dbReference type="Proteomes" id="UP000007752">
    <property type="component" value="Chromosome 3"/>
</dbReference>
<dbReference type="Proteomes" id="UP000059680">
    <property type="component" value="Chromosome 3"/>
</dbReference>
<dbReference type="GO" id="GO:0005576">
    <property type="term" value="C:extracellular region"/>
    <property type="evidence" value="ECO:0007669"/>
    <property type="project" value="UniProtKB-SubCell"/>
</dbReference>
<dbReference type="GO" id="GO:0009828">
    <property type="term" value="P:plant-type cell wall loosening"/>
    <property type="evidence" value="ECO:0000250"/>
    <property type="project" value="UniProtKB"/>
</dbReference>
<dbReference type="CDD" id="cd22276">
    <property type="entry name" value="DPBB_EXLA_N"/>
    <property type="match status" value="1"/>
</dbReference>
<dbReference type="Gene3D" id="2.60.40.760">
    <property type="entry name" value="Expansin, cellulose-binding-like domain"/>
    <property type="match status" value="1"/>
</dbReference>
<dbReference type="Gene3D" id="2.40.40.10">
    <property type="entry name" value="RlpA-like domain"/>
    <property type="match status" value="1"/>
</dbReference>
<dbReference type="InterPro" id="IPR007118">
    <property type="entry name" value="Expan_Lol_pI"/>
</dbReference>
<dbReference type="InterPro" id="IPR007112">
    <property type="entry name" value="Expansin/allergen_DPBB_dom"/>
</dbReference>
<dbReference type="InterPro" id="IPR007117">
    <property type="entry name" value="Expansin_CBD"/>
</dbReference>
<dbReference type="InterPro" id="IPR036749">
    <property type="entry name" value="Expansin_CBD_sf"/>
</dbReference>
<dbReference type="InterPro" id="IPR009009">
    <property type="entry name" value="RlpA-like_DPBB"/>
</dbReference>
<dbReference type="InterPro" id="IPR036908">
    <property type="entry name" value="RlpA-like_sf"/>
</dbReference>
<dbReference type="PANTHER" id="PTHR31692">
    <property type="entry name" value="EXPANSIN-B3"/>
    <property type="match status" value="1"/>
</dbReference>
<dbReference type="PANTHER" id="PTHR31692:SF128">
    <property type="entry name" value="EXPANSIN-LIKE A1"/>
    <property type="match status" value="1"/>
</dbReference>
<dbReference type="Pfam" id="PF03330">
    <property type="entry name" value="DPBB_1"/>
    <property type="match status" value="1"/>
</dbReference>
<dbReference type="Pfam" id="PF01357">
    <property type="entry name" value="Expansin_C"/>
    <property type="match status" value="1"/>
</dbReference>
<dbReference type="PRINTS" id="PR01225">
    <property type="entry name" value="EXPANSNFAMLY"/>
</dbReference>
<dbReference type="SUPFAM" id="SSF50685">
    <property type="entry name" value="Barwin-like endoglucanases"/>
    <property type="match status" value="1"/>
</dbReference>
<dbReference type="SUPFAM" id="SSF49590">
    <property type="entry name" value="PHL pollen allergen"/>
    <property type="match status" value="1"/>
</dbReference>
<dbReference type="PROSITE" id="PS50843">
    <property type="entry name" value="EXPANSIN_CBD"/>
    <property type="match status" value="1"/>
</dbReference>
<dbReference type="PROSITE" id="PS50842">
    <property type="entry name" value="EXPANSIN_EG45"/>
    <property type="match status" value="1"/>
</dbReference>
<proteinExistence type="evidence at transcript level"/>
<protein>
    <recommendedName>
        <fullName>Expansin-like A1</fullName>
    </recommendedName>
    <alternativeName>
        <fullName>OsEXLA1</fullName>
    </alternativeName>
    <alternativeName>
        <fullName>OsEXPL1</fullName>
    </alternativeName>
    <alternativeName>
        <fullName>OsaEXPb2.1</fullName>
    </alternativeName>
</protein>
<comment type="subcellular location">
    <subcellularLocation>
        <location evidence="5">Secreted</location>
    </subcellularLocation>
</comment>
<comment type="developmental stage">
    <text evidence="4">Expressed in the growing regions of roots, coleoptiles, internodes, and leaves.</text>
</comment>
<comment type="induction">
    <text evidence="4">Down-regulated by gibberellin (GA3).</text>
</comment>
<comment type="similarity">
    <text evidence="5">Belongs to the expansin family. Expansin-like A subfamily.</text>
</comment>
<comment type="online information" name="EXPANSIN homepage">
    <link uri="https://www.dept.psu.edu/biology/groups/expansins/index.htm"/>
</comment>
<gene>
    <name type="primary">EXLA1</name>
    <name type="synonym">EXPL1</name>
    <name type="ordered locus">Os03g0132200</name>
    <name type="ordered locus">LOC_Os03g04020</name>
    <name type="ORF">OJ1004C08.4</name>
    <name evidence="6" type="ORF">OsJ_09301</name>
</gene>
<evidence type="ECO:0000255" key="1"/>
<evidence type="ECO:0000255" key="2">
    <source>
        <dbReference type="PROSITE-ProRule" id="PRU00078"/>
    </source>
</evidence>
<evidence type="ECO:0000255" key="3">
    <source>
        <dbReference type="PROSITE-ProRule" id="PRU00079"/>
    </source>
</evidence>
<evidence type="ECO:0000269" key="4">
    <source>
    </source>
</evidence>
<evidence type="ECO:0000305" key="5"/>
<evidence type="ECO:0000312" key="6">
    <source>
        <dbReference type="EMBL" id="EEE58281.1"/>
    </source>
</evidence>
<organism>
    <name type="scientific">Oryza sativa subsp. japonica</name>
    <name type="common">Rice</name>
    <dbReference type="NCBI Taxonomy" id="39947"/>
    <lineage>
        <taxon>Eukaryota</taxon>
        <taxon>Viridiplantae</taxon>
        <taxon>Streptophyta</taxon>
        <taxon>Embryophyta</taxon>
        <taxon>Tracheophyta</taxon>
        <taxon>Spermatophyta</taxon>
        <taxon>Magnoliopsida</taxon>
        <taxon>Liliopsida</taxon>
        <taxon>Poales</taxon>
        <taxon>Poaceae</taxon>
        <taxon>BOP clade</taxon>
        <taxon>Oryzoideae</taxon>
        <taxon>Oryzeae</taxon>
        <taxon>Oryzinae</taxon>
        <taxon>Oryza</taxon>
        <taxon>Oryza sativa</taxon>
    </lineage>
</organism>
<keyword id="KW-0325">Glycoprotein</keyword>
<keyword id="KW-1185">Reference proteome</keyword>
<keyword id="KW-0964">Secreted</keyword>
<keyword id="KW-0732">Signal</keyword>
<reference key="1">
    <citation type="journal article" date="2002" name="Plant Physiol.">
        <title>Expression of alpha-expansin and expansin-like genes in deepwater rice.</title>
        <authorList>
            <person name="Lee Y."/>
            <person name="Kende H."/>
        </authorList>
    </citation>
    <scope>NUCLEOTIDE SEQUENCE [GENOMIC DNA / MRNA]</scope>
    <scope>DEVELOPMENTAL STAGE</scope>
    <scope>INDUCTION</scope>
</reference>
<reference key="2">
    <citation type="journal article" date="2005" name="Genome Res.">
        <title>Sequence, annotation, and analysis of synteny between rice chromosome 3 and diverged grass species.</title>
        <authorList>
            <consortium name="The rice chromosome 3 sequencing consortium"/>
            <person name="Buell C.R."/>
            <person name="Yuan Q."/>
            <person name="Ouyang S."/>
            <person name="Liu J."/>
            <person name="Zhu W."/>
            <person name="Wang A."/>
            <person name="Maiti R."/>
            <person name="Haas B."/>
            <person name="Wortman J."/>
            <person name="Pertea M."/>
            <person name="Jones K.M."/>
            <person name="Kim M."/>
            <person name="Overton L."/>
            <person name="Tsitrin T."/>
            <person name="Fadrosh D."/>
            <person name="Bera J."/>
            <person name="Weaver B."/>
            <person name="Jin S."/>
            <person name="Johri S."/>
            <person name="Reardon M."/>
            <person name="Webb K."/>
            <person name="Hill J."/>
            <person name="Moffat K."/>
            <person name="Tallon L."/>
            <person name="Van Aken S."/>
            <person name="Lewis M."/>
            <person name="Utterback T."/>
            <person name="Feldblyum T."/>
            <person name="Zismann V."/>
            <person name="Iobst S."/>
            <person name="Hsiao J."/>
            <person name="de Vazeille A.R."/>
            <person name="Salzberg S.L."/>
            <person name="White O."/>
            <person name="Fraser C.M."/>
            <person name="Yu Y."/>
            <person name="Kim H."/>
            <person name="Rambo T."/>
            <person name="Currie J."/>
            <person name="Collura K."/>
            <person name="Kernodle-Thompson S."/>
            <person name="Wei F."/>
            <person name="Kudrna K."/>
            <person name="Ammiraju J.S.S."/>
            <person name="Luo M."/>
            <person name="Goicoechea J.L."/>
            <person name="Wing R.A."/>
            <person name="Henry D."/>
            <person name="Oates R."/>
            <person name="Palmer M."/>
            <person name="Pries G."/>
            <person name="Saski C."/>
            <person name="Simmons J."/>
            <person name="Soderlund C."/>
            <person name="Nelson W."/>
            <person name="de la Bastide M."/>
            <person name="Spiegel L."/>
            <person name="Nascimento L."/>
            <person name="Huang E."/>
            <person name="Preston R."/>
            <person name="Zutavern T."/>
            <person name="Palmer L."/>
            <person name="O'Shaughnessy A."/>
            <person name="Dike S."/>
            <person name="McCombie W.R."/>
            <person name="Minx P."/>
            <person name="Cordum H."/>
            <person name="Wilson R."/>
            <person name="Jin W."/>
            <person name="Lee H.R."/>
            <person name="Jiang J."/>
            <person name="Jackson S."/>
        </authorList>
    </citation>
    <scope>NUCLEOTIDE SEQUENCE [LARGE SCALE GENOMIC DNA]</scope>
    <source>
        <strain>cv. Nipponbare</strain>
    </source>
</reference>
<reference key="3">
    <citation type="journal article" date="2005" name="Nature">
        <title>The map-based sequence of the rice genome.</title>
        <authorList>
            <consortium name="International rice genome sequencing project (IRGSP)"/>
        </authorList>
    </citation>
    <scope>NUCLEOTIDE SEQUENCE [LARGE SCALE GENOMIC DNA]</scope>
    <source>
        <strain>cv. Nipponbare</strain>
    </source>
</reference>
<reference key="4">
    <citation type="journal article" date="2008" name="Nucleic Acids Res.">
        <title>The rice annotation project database (RAP-DB): 2008 update.</title>
        <authorList>
            <consortium name="The rice annotation project (RAP)"/>
        </authorList>
    </citation>
    <scope>GENOME REANNOTATION</scope>
    <source>
        <strain>cv. Nipponbare</strain>
    </source>
</reference>
<reference key="5">
    <citation type="journal article" date="2013" name="Rice">
        <title>Improvement of the Oryza sativa Nipponbare reference genome using next generation sequence and optical map data.</title>
        <authorList>
            <person name="Kawahara Y."/>
            <person name="de la Bastide M."/>
            <person name="Hamilton J.P."/>
            <person name="Kanamori H."/>
            <person name="McCombie W.R."/>
            <person name="Ouyang S."/>
            <person name="Schwartz D.C."/>
            <person name="Tanaka T."/>
            <person name="Wu J."/>
            <person name="Zhou S."/>
            <person name="Childs K.L."/>
            <person name="Davidson R.M."/>
            <person name="Lin H."/>
            <person name="Quesada-Ocampo L."/>
            <person name="Vaillancourt B."/>
            <person name="Sakai H."/>
            <person name="Lee S.S."/>
            <person name="Kim J."/>
            <person name="Numa H."/>
            <person name="Itoh T."/>
            <person name="Buell C.R."/>
            <person name="Matsumoto T."/>
        </authorList>
    </citation>
    <scope>GENOME REANNOTATION</scope>
    <source>
        <strain>cv. Nipponbare</strain>
    </source>
</reference>
<reference key="6">
    <citation type="journal article" date="2005" name="PLoS Biol.">
        <title>The genomes of Oryza sativa: a history of duplications.</title>
        <authorList>
            <person name="Yu J."/>
            <person name="Wang J."/>
            <person name="Lin W."/>
            <person name="Li S."/>
            <person name="Li H."/>
            <person name="Zhou J."/>
            <person name="Ni P."/>
            <person name="Dong W."/>
            <person name="Hu S."/>
            <person name="Zeng C."/>
            <person name="Zhang J."/>
            <person name="Zhang Y."/>
            <person name="Li R."/>
            <person name="Xu Z."/>
            <person name="Li S."/>
            <person name="Li X."/>
            <person name="Zheng H."/>
            <person name="Cong L."/>
            <person name="Lin L."/>
            <person name="Yin J."/>
            <person name="Geng J."/>
            <person name="Li G."/>
            <person name="Shi J."/>
            <person name="Liu J."/>
            <person name="Lv H."/>
            <person name="Li J."/>
            <person name="Wang J."/>
            <person name="Deng Y."/>
            <person name="Ran L."/>
            <person name="Shi X."/>
            <person name="Wang X."/>
            <person name="Wu Q."/>
            <person name="Li C."/>
            <person name="Ren X."/>
            <person name="Wang J."/>
            <person name="Wang X."/>
            <person name="Li D."/>
            <person name="Liu D."/>
            <person name="Zhang X."/>
            <person name="Ji Z."/>
            <person name="Zhao W."/>
            <person name="Sun Y."/>
            <person name="Zhang Z."/>
            <person name="Bao J."/>
            <person name="Han Y."/>
            <person name="Dong L."/>
            <person name="Ji J."/>
            <person name="Chen P."/>
            <person name="Wu S."/>
            <person name="Liu J."/>
            <person name="Xiao Y."/>
            <person name="Bu D."/>
            <person name="Tan J."/>
            <person name="Yang L."/>
            <person name="Ye C."/>
            <person name="Zhang J."/>
            <person name="Xu J."/>
            <person name="Zhou Y."/>
            <person name="Yu Y."/>
            <person name="Zhang B."/>
            <person name="Zhuang S."/>
            <person name="Wei H."/>
            <person name="Liu B."/>
            <person name="Lei M."/>
            <person name="Yu H."/>
            <person name="Li Y."/>
            <person name="Xu H."/>
            <person name="Wei S."/>
            <person name="He X."/>
            <person name="Fang L."/>
            <person name="Zhang Z."/>
            <person name="Zhang Y."/>
            <person name="Huang X."/>
            <person name="Su Z."/>
            <person name="Tong W."/>
            <person name="Li J."/>
            <person name="Tong Z."/>
            <person name="Li S."/>
            <person name="Ye J."/>
            <person name="Wang L."/>
            <person name="Fang L."/>
            <person name="Lei T."/>
            <person name="Chen C.-S."/>
            <person name="Chen H.-C."/>
            <person name="Xu Z."/>
            <person name="Li H."/>
            <person name="Huang H."/>
            <person name="Zhang F."/>
            <person name="Xu H."/>
            <person name="Li N."/>
            <person name="Zhao C."/>
            <person name="Li S."/>
            <person name="Dong L."/>
            <person name="Huang Y."/>
            <person name="Li L."/>
            <person name="Xi Y."/>
            <person name="Qi Q."/>
            <person name="Li W."/>
            <person name="Zhang B."/>
            <person name="Hu W."/>
            <person name="Zhang Y."/>
            <person name="Tian X."/>
            <person name="Jiao Y."/>
            <person name="Liang X."/>
            <person name="Jin J."/>
            <person name="Gao L."/>
            <person name="Zheng W."/>
            <person name="Hao B."/>
            <person name="Liu S.-M."/>
            <person name="Wang W."/>
            <person name="Yuan L."/>
            <person name="Cao M."/>
            <person name="McDermott J."/>
            <person name="Samudrala R."/>
            <person name="Wang J."/>
            <person name="Wong G.K.-S."/>
            <person name="Yang H."/>
        </authorList>
    </citation>
    <scope>NUCLEOTIDE SEQUENCE [LARGE SCALE GENOMIC DNA]</scope>
    <source>
        <strain>cv. Nipponbare</strain>
    </source>
</reference>
<reference key="7">
    <citation type="journal article" date="2003" name="Science">
        <title>Collection, mapping, and annotation of over 28,000 cDNA clones from japonica rice.</title>
        <authorList>
            <consortium name="The rice full-length cDNA consortium"/>
        </authorList>
    </citation>
    <scope>NUCLEOTIDE SEQUENCE [LARGE SCALE MRNA]</scope>
    <source>
        <strain>cv. Nipponbare</strain>
    </source>
</reference>
<reference key="8">
    <citation type="journal article" date="2004" name="Plant Mol. Biol.">
        <title>Nomenclature for members of the expansin superfamily of genes and proteins.</title>
        <authorList>
            <person name="Kende H."/>
            <person name="Bradford K.J."/>
            <person name="Brummell D.A."/>
            <person name="Cho H.-T."/>
            <person name="Cosgrove D.J."/>
            <person name="Fleming A.J."/>
            <person name="Gehring C."/>
            <person name="Lee Y."/>
            <person name="McQueen-Mason S.J."/>
            <person name="Rose J.K.C."/>
            <person name="Voesenek L.A.C."/>
        </authorList>
    </citation>
    <scope>NOMENCLATURE</scope>
</reference>
<name>EXLA1_ORYSJ</name>